<gene>
    <name type="primary">TVP18</name>
    <name type="ORF">MGG_11897</name>
</gene>
<name>TVP18_PYRO7</name>
<organism>
    <name type="scientific">Pyricularia oryzae (strain 70-15 / ATCC MYA-4617 / FGSC 8958)</name>
    <name type="common">Rice blast fungus</name>
    <name type="synonym">Magnaporthe oryzae</name>
    <dbReference type="NCBI Taxonomy" id="242507"/>
    <lineage>
        <taxon>Eukaryota</taxon>
        <taxon>Fungi</taxon>
        <taxon>Dikarya</taxon>
        <taxon>Ascomycota</taxon>
        <taxon>Pezizomycotina</taxon>
        <taxon>Sordariomycetes</taxon>
        <taxon>Sordariomycetidae</taxon>
        <taxon>Magnaporthales</taxon>
        <taxon>Pyriculariaceae</taxon>
        <taxon>Pyricularia</taxon>
    </lineage>
</organism>
<sequence length="149" mass="16016">MTLKEEFATRNFSIYGQWLGVLSMILCFALGIANIFTFRLLLIIFSVICLVSSFVILFIEVPLLLRICPTSSTFDDAIRKVSTNYMRAAAYLVMGVVQWLSLLGGASSLIAAAVFLTLTAICYALAGVKGQAFVGSKTLGGSGVAQMIV</sequence>
<comment type="function">
    <text evidence="1">Golgi membrane protein involved in vesicular trafficking.</text>
</comment>
<comment type="subcellular location">
    <subcellularLocation>
        <location evidence="1">Golgi apparatus membrane</location>
        <topology evidence="1">Multi-pass membrane protein</topology>
    </subcellularLocation>
</comment>
<comment type="similarity">
    <text evidence="3">Belongs to the TVP18 family.</text>
</comment>
<accession>A4R2N5</accession>
<accession>G4MRZ4</accession>
<reference key="1">
    <citation type="journal article" date="2005" name="Nature">
        <title>The genome sequence of the rice blast fungus Magnaporthe grisea.</title>
        <authorList>
            <person name="Dean R.A."/>
            <person name="Talbot N.J."/>
            <person name="Ebbole D.J."/>
            <person name="Farman M.L."/>
            <person name="Mitchell T.K."/>
            <person name="Orbach M.J."/>
            <person name="Thon M.R."/>
            <person name="Kulkarni R."/>
            <person name="Xu J.-R."/>
            <person name="Pan H."/>
            <person name="Read N.D."/>
            <person name="Lee Y.-H."/>
            <person name="Carbone I."/>
            <person name="Brown D."/>
            <person name="Oh Y.Y."/>
            <person name="Donofrio N."/>
            <person name="Jeong J.S."/>
            <person name="Soanes D.M."/>
            <person name="Djonovic S."/>
            <person name="Kolomiets E."/>
            <person name="Rehmeyer C."/>
            <person name="Li W."/>
            <person name="Harding M."/>
            <person name="Kim S."/>
            <person name="Lebrun M.-H."/>
            <person name="Bohnert H."/>
            <person name="Coughlan S."/>
            <person name="Butler J."/>
            <person name="Calvo S.E."/>
            <person name="Ma L.-J."/>
            <person name="Nicol R."/>
            <person name="Purcell S."/>
            <person name="Nusbaum C."/>
            <person name="Galagan J.E."/>
            <person name="Birren B.W."/>
        </authorList>
    </citation>
    <scope>NUCLEOTIDE SEQUENCE [LARGE SCALE GENOMIC DNA]</scope>
    <source>
        <strain>70-15 / ATCC MYA-4617 / FGSC 8958</strain>
    </source>
</reference>
<proteinExistence type="inferred from homology"/>
<dbReference type="EMBL" id="CM001231">
    <property type="protein sequence ID" value="EHA56663.1"/>
    <property type="molecule type" value="Genomic_DNA"/>
</dbReference>
<dbReference type="RefSeq" id="XP_003709275.1">
    <property type="nucleotide sequence ID" value="XM_003709227.1"/>
</dbReference>
<dbReference type="FunCoup" id="A4R2N5">
    <property type="interactions" value="42"/>
</dbReference>
<dbReference type="STRING" id="242507.A4R2N5"/>
<dbReference type="GlyCosmos" id="A4R2N5">
    <property type="glycosylation" value="1 site, No reported glycans"/>
</dbReference>
<dbReference type="EnsemblFungi" id="MGG_11897T0">
    <property type="protein sequence ID" value="MGG_11897T0"/>
    <property type="gene ID" value="MGG_11897"/>
</dbReference>
<dbReference type="GeneID" id="2681577"/>
<dbReference type="KEGG" id="mgr:MGG_11897"/>
<dbReference type="VEuPathDB" id="FungiDB:MGG_11897"/>
<dbReference type="eggNOG" id="ENOG502S3AC">
    <property type="taxonomic scope" value="Eukaryota"/>
</dbReference>
<dbReference type="HOGENOM" id="CLU_118698_0_0_1"/>
<dbReference type="InParanoid" id="A4R2N5"/>
<dbReference type="OMA" id="IYAQWLG"/>
<dbReference type="OrthoDB" id="5591789at2759"/>
<dbReference type="Proteomes" id="UP000009058">
    <property type="component" value="Chromosome 1"/>
</dbReference>
<dbReference type="GO" id="GO:0005794">
    <property type="term" value="C:Golgi apparatus"/>
    <property type="evidence" value="ECO:0000250"/>
    <property type="project" value="PAMGO_MGG"/>
</dbReference>
<dbReference type="GO" id="GO:0000139">
    <property type="term" value="C:Golgi membrane"/>
    <property type="evidence" value="ECO:0007669"/>
    <property type="project" value="UniProtKB-SubCell"/>
</dbReference>
<dbReference type="GO" id="GO:0016020">
    <property type="term" value="C:membrane"/>
    <property type="evidence" value="ECO:0000250"/>
    <property type="project" value="PAMGO_MGG"/>
</dbReference>
<dbReference type="GO" id="GO:0016192">
    <property type="term" value="P:vesicle-mediated transport"/>
    <property type="evidence" value="ECO:0007669"/>
    <property type="project" value="TreeGrafter"/>
</dbReference>
<dbReference type="InterPro" id="IPR019365">
    <property type="entry name" value="TVP18/Ca-channel_flower"/>
</dbReference>
<dbReference type="PANTHER" id="PTHR13314">
    <property type="entry name" value="CALCIUM CHANNEL FLOWER HOMOLOG"/>
    <property type="match status" value="1"/>
</dbReference>
<dbReference type="PANTHER" id="PTHR13314:SF2">
    <property type="entry name" value="CALCIUM CHANNEL FLOWER HOMOLOG"/>
    <property type="match status" value="1"/>
</dbReference>
<dbReference type="Pfam" id="PF10233">
    <property type="entry name" value="Cg6151-P"/>
    <property type="match status" value="1"/>
</dbReference>
<dbReference type="SMART" id="SM01077">
    <property type="entry name" value="Cg6151-P"/>
    <property type="match status" value="1"/>
</dbReference>
<feature type="chain" id="PRO_0000343022" description="Golgi apparatus membrane protein TVP18">
    <location>
        <begin position="1"/>
        <end position="149"/>
    </location>
</feature>
<feature type="transmembrane region" description="Helical" evidence="2">
    <location>
        <begin position="18"/>
        <end position="38"/>
    </location>
</feature>
<feature type="transmembrane region" description="Helical" evidence="2">
    <location>
        <begin position="41"/>
        <end position="61"/>
    </location>
</feature>
<feature type="transmembrane region" description="Helical" evidence="2">
    <location>
        <begin position="86"/>
        <end position="106"/>
    </location>
</feature>
<feature type="transmembrane region" description="Helical" evidence="2">
    <location>
        <begin position="108"/>
        <end position="128"/>
    </location>
</feature>
<feature type="glycosylation site" description="N-linked (GlcNAc...) asparagine" evidence="2">
    <location>
        <position position="11"/>
    </location>
</feature>
<evidence type="ECO:0000250" key="1"/>
<evidence type="ECO:0000255" key="2"/>
<evidence type="ECO:0000305" key="3"/>
<keyword id="KW-0325">Glycoprotein</keyword>
<keyword id="KW-0333">Golgi apparatus</keyword>
<keyword id="KW-0472">Membrane</keyword>
<keyword id="KW-1185">Reference proteome</keyword>
<keyword id="KW-0812">Transmembrane</keyword>
<keyword id="KW-1133">Transmembrane helix</keyword>
<protein>
    <recommendedName>
        <fullName>Golgi apparatus membrane protein TVP18</fullName>
    </recommendedName>
</protein>